<protein>
    <recommendedName>
        <fullName evidence="1">ATP synthase subunit delta</fullName>
    </recommendedName>
    <alternativeName>
        <fullName evidence="1">ATP synthase F(1) sector subunit delta</fullName>
    </alternativeName>
    <alternativeName>
        <fullName evidence="1">F-type ATPase subunit delta</fullName>
        <shortName evidence="1">F-ATPase subunit delta</shortName>
    </alternativeName>
</protein>
<feature type="chain" id="PRO_1000215231" description="ATP synthase subunit delta">
    <location>
        <begin position="1"/>
        <end position="271"/>
    </location>
</feature>
<gene>
    <name evidence="1" type="primary">atpH</name>
    <name type="ordered locus">ckrop_1277</name>
</gene>
<proteinExistence type="inferred from homology"/>
<evidence type="ECO:0000255" key="1">
    <source>
        <dbReference type="HAMAP-Rule" id="MF_01416"/>
    </source>
</evidence>
<reference key="1">
    <citation type="journal article" date="2008" name="J. Biotechnol.">
        <title>Ultrafast pyrosequencing of Corynebacterium kroppenstedtii DSM44385 revealed insights into the physiology of a lipophilic corynebacterium that lacks mycolic acids.</title>
        <authorList>
            <person name="Tauch A."/>
            <person name="Schneider J."/>
            <person name="Szczepanowski R."/>
            <person name="Tilker A."/>
            <person name="Viehoever P."/>
            <person name="Gartemann K.-H."/>
            <person name="Arnold W."/>
            <person name="Blom J."/>
            <person name="Brinkrolf K."/>
            <person name="Brune I."/>
            <person name="Goetker S."/>
            <person name="Weisshaar B."/>
            <person name="Goesmann A."/>
            <person name="Droege M."/>
            <person name="Puehler A."/>
        </authorList>
    </citation>
    <scope>NUCLEOTIDE SEQUENCE [LARGE SCALE GENOMIC DNA]</scope>
    <source>
        <strain>DSM 44385 / JCM 11950 / CIP 105744 / CCUG 35717</strain>
    </source>
</reference>
<accession>C4LJL7</accession>
<dbReference type="EMBL" id="CP001620">
    <property type="protein sequence ID" value="ACR18022.1"/>
    <property type="molecule type" value="Genomic_DNA"/>
</dbReference>
<dbReference type="RefSeq" id="WP_012731909.1">
    <property type="nucleotide sequence ID" value="NC_012704.1"/>
</dbReference>
<dbReference type="SMR" id="C4LJL7"/>
<dbReference type="STRING" id="645127.ckrop_1277"/>
<dbReference type="KEGG" id="ckp:ckrop_1277"/>
<dbReference type="eggNOG" id="COG0712">
    <property type="taxonomic scope" value="Bacteria"/>
</dbReference>
<dbReference type="HOGENOM" id="CLU_088880_0_0_11"/>
<dbReference type="OrthoDB" id="5242917at2"/>
<dbReference type="Proteomes" id="UP000001473">
    <property type="component" value="Chromosome"/>
</dbReference>
<dbReference type="GO" id="GO:0005886">
    <property type="term" value="C:plasma membrane"/>
    <property type="evidence" value="ECO:0007669"/>
    <property type="project" value="UniProtKB-SubCell"/>
</dbReference>
<dbReference type="GO" id="GO:0045259">
    <property type="term" value="C:proton-transporting ATP synthase complex"/>
    <property type="evidence" value="ECO:0007669"/>
    <property type="project" value="UniProtKB-KW"/>
</dbReference>
<dbReference type="GO" id="GO:0046933">
    <property type="term" value="F:proton-transporting ATP synthase activity, rotational mechanism"/>
    <property type="evidence" value="ECO:0007669"/>
    <property type="project" value="UniProtKB-UniRule"/>
</dbReference>
<dbReference type="Gene3D" id="1.10.520.20">
    <property type="entry name" value="N-terminal domain of the delta subunit of the F1F0-ATP synthase"/>
    <property type="match status" value="1"/>
</dbReference>
<dbReference type="HAMAP" id="MF_01416">
    <property type="entry name" value="ATP_synth_delta_bact"/>
    <property type="match status" value="1"/>
</dbReference>
<dbReference type="InterPro" id="IPR026015">
    <property type="entry name" value="ATP_synth_OSCP/delta_N_sf"/>
</dbReference>
<dbReference type="InterPro" id="IPR020781">
    <property type="entry name" value="ATPase_OSCP/d_CS"/>
</dbReference>
<dbReference type="InterPro" id="IPR000711">
    <property type="entry name" value="ATPase_OSCP/dsu"/>
</dbReference>
<dbReference type="NCBIfam" id="TIGR01145">
    <property type="entry name" value="ATP_synt_delta"/>
    <property type="match status" value="1"/>
</dbReference>
<dbReference type="NCBIfam" id="NF009967">
    <property type="entry name" value="PRK13430.1"/>
    <property type="match status" value="1"/>
</dbReference>
<dbReference type="PANTHER" id="PTHR11910">
    <property type="entry name" value="ATP SYNTHASE DELTA CHAIN"/>
    <property type="match status" value="1"/>
</dbReference>
<dbReference type="Pfam" id="PF00213">
    <property type="entry name" value="OSCP"/>
    <property type="match status" value="1"/>
</dbReference>
<dbReference type="PRINTS" id="PR00125">
    <property type="entry name" value="ATPASEDELTA"/>
</dbReference>
<dbReference type="PROSITE" id="PS00389">
    <property type="entry name" value="ATPASE_DELTA"/>
    <property type="match status" value="1"/>
</dbReference>
<name>ATPD_CORK4</name>
<sequence>MHAASRESMTELATTLDNTVAQSNAAVDGAQIGPELFDVVEVLDSNRDLRVALIDPAASSEKRADLADRVFGEKLNQASRSVLRSAVDKDWSNTRDFRNGLVQLGRRALFRAAEADDKLTTVESELFQLARVLEDAPQLEMLLADRQASADRRRQLLASVLYGKVTSITETLALQAISRAKQRPVEACETLSREAAQLRGYEVAHVVTAGELSDTQRSTLADKLGRIYGHKMSIHGEVDPSILGGMVIRVGDERIDGSTSGKLEKLRRAFA</sequence>
<comment type="function">
    <text evidence="1">F(1)F(0) ATP synthase produces ATP from ADP in the presence of a proton or sodium gradient. F-type ATPases consist of two structural domains, F(1) containing the extramembraneous catalytic core and F(0) containing the membrane proton channel, linked together by a central stalk and a peripheral stalk. During catalysis, ATP synthesis in the catalytic domain of F(1) is coupled via a rotary mechanism of the central stalk subunits to proton translocation.</text>
</comment>
<comment type="function">
    <text evidence="1">This protein is part of the stalk that links CF(0) to CF(1). It either transmits conformational changes from CF(0) to CF(1) or is implicated in proton conduction.</text>
</comment>
<comment type="subunit">
    <text evidence="1">F-type ATPases have 2 components, F(1) - the catalytic core - and F(0) - the membrane proton channel. F(1) has five subunits: alpha(3), beta(3), gamma(1), delta(1), epsilon(1). F(0) has three main subunits: a(1), b(2) and c(10-14). The alpha and beta chains form an alternating ring which encloses part of the gamma chain. F(1) is attached to F(0) by a central stalk formed by the gamma and epsilon chains, while a peripheral stalk is formed by the delta and b chains.</text>
</comment>
<comment type="subcellular location">
    <subcellularLocation>
        <location evidence="1">Cell membrane</location>
        <topology evidence="1">Peripheral membrane protein</topology>
    </subcellularLocation>
</comment>
<comment type="similarity">
    <text evidence="1">Belongs to the ATPase delta chain family.</text>
</comment>
<keyword id="KW-0066">ATP synthesis</keyword>
<keyword id="KW-1003">Cell membrane</keyword>
<keyword id="KW-0139">CF(1)</keyword>
<keyword id="KW-0375">Hydrogen ion transport</keyword>
<keyword id="KW-0406">Ion transport</keyword>
<keyword id="KW-0472">Membrane</keyword>
<keyword id="KW-1185">Reference proteome</keyword>
<keyword id="KW-0813">Transport</keyword>
<organism>
    <name type="scientific">Corynebacterium kroppenstedtii (strain DSM 44385 / JCM 11950 / CIP 105744 / CCUG 35717)</name>
    <dbReference type="NCBI Taxonomy" id="645127"/>
    <lineage>
        <taxon>Bacteria</taxon>
        <taxon>Bacillati</taxon>
        <taxon>Actinomycetota</taxon>
        <taxon>Actinomycetes</taxon>
        <taxon>Mycobacteriales</taxon>
        <taxon>Corynebacteriaceae</taxon>
        <taxon>Corynebacterium</taxon>
    </lineage>
</organism>